<organism>
    <name type="scientific">Colwellia psychrerythraea (strain 34H / ATCC BAA-681)</name>
    <name type="common">Vibrio psychroerythus</name>
    <dbReference type="NCBI Taxonomy" id="167879"/>
    <lineage>
        <taxon>Bacteria</taxon>
        <taxon>Pseudomonadati</taxon>
        <taxon>Pseudomonadota</taxon>
        <taxon>Gammaproteobacteria</taxon>
        <taxon>Alteromonadales</taxon>
        <taxon>Colwelliaceae</taxon>
        <taxon>Colwellia</taxon>
    </lineage>
</organism>
<protein>
    <recommendedName>
        <fullName evidence="1">Protein-L-isoaspartate O-methyltransferase</fullName>
        <ecNumber evidence="1">2.1.1.77</ecNumber>
    </recommendedName>
    <alternativeName>
        <fullName evidence="1">L-isoaspartyl protein carboxyl methyltransferase</fullName>
    </alternativeName>
    <alternativeName>
        <fullName evidence="1">Protein L-isoaspartyl methyltransferase</fullName>
    </alternativeName>
    <alternativeName>
        <fullName evidence="1">Protein-beta-aspartate methyltransferase</fullName>
        <shortName evidence="1">PIMT</shortName>
    </alternativeName>
</protein>
<keyword id="KW-0963">Cytoplasm</keyword>
<keyword id="KW-0489">Methyltransferase</keyword>
<keyword id="KW-0949">S-adenosyl-L-methionine</keyword>
<keyword id="KW-0808">Transferase</keyword>
<sequence>MSSRIGGKSKRSGELLAQKLQSEGISNPAVLKAIAHSPRHIFVPEILAHKAYDNTALPIGQGQTISQPYIVAKMSELLLADGRPQNILEIGTGSGYQTAILAQLTDKVFSVERIKALQWQAKRCLRAMDLHNVAMKHGDGWQGWRSKGPFDAIIVTAAPSSVPPALLDQLADGGRLVIPVGEQTQILKIITREGDVYNEQQVEAVRFVPLVPGDLL</sequence>
<evidence type="ECO:0000255" key="1">
    <source>
        <dbReference type="HAMAP-Rule" id="MF_00090"/>
    </source>
</evidence>
<name>PIMT_COLP3</name>
<dbReference type="EC" id="2.1.1.77" evidence="1"/>
<dbReference type="EMBL" id="CP000083">
    <property type="protein sequence ID" value="AAZ26349.1"/>
    <property type="molecule type" value="Genomic_DNA"/>
</dbReference>
<dbReference type="RefSeq" id="WP_011041914.1">
    <property type="nucleotide sequence ID" value="NC_003910.7"/>
</dbReference>
<dbReference type="SMR" id="Q487E5"/>
<dbReference type="STRING" id="167879.CPS_1076"/>
<dbReference type="KEGG" id="cps:CPS_1076"/>
<dbReference type="eggNOG" id="COG2518">
    <property type="taxonomic scope" value="Bacteria"/>
</dbReference>
<dbReference type="HOGENOM" id="CLU_055432_2_0_6"/>
<dbReference type="Proteomes" id="UP000000547">
    <property type="component" value="Chromosome"/>
</dbReference>
<dbReference type="GO" id="GO:0005737">
    <property type="term" value="C:cytoplasm"/>
    <property type="evidence" value="ECO:0007669"/>
    <property type="project" value="UniProtKB-SubCell"/>
</dbReference>
<dbReference type="GO" id="GO:0004719">
    <property type="term" value="F:protein-L-isoaspartate (D-aspartate) O-methyltransferase activity"/>
    <property type="evidence" value="ECO:0007669"/>
    <property type="project" value="UniProtKB-UniRule"/>
</dbReference>
<dbReference type="GO" id="GO:0032259">
    <property type="term" value="P:methylation"/>
    <property type="evidence" value="ECO:0007669"/>
    <property type="project" value="UniProtKB-KW"/>
</dbReference>
<dbReference type="GO" id="GO:0036211">
    <property type="term" value="P:protein modification process"/>
    <property type="evidence" value="ECO:0007669"/>
    <property type="project" value="UniProtKB-UniRule"/>
</dbReference>
<dbReference type="GO" id="GO:0030091">
    <property type="term" value="P:protein repair"/>
    <property type="evidence" value="ECO:0007669"/>
    <property type="project" value="UniProtKB-UniRule"/>
</dbReference>
<dbReference type="CDD" id="cd02440">
    <property type="entry name" value="AdoMet_MTases"/>
    <property type="match status" value="1"/>
</dbReference>
<dbReference type="FunFam" id="3.40.50.150:FF:000010">
    <property type="entry name" value="Protein-L-isoaspartate O-methyltransferase"/>
    <property type="match status" value="1"/>
</dbReference>
<dbReference type="Gene3D" id="3.40.50.150">
    <property type="entry name" value="Vaccinia Virus protein VP39"/>
    <property type="match status" value="1"/>
</dbReference>
<dbReference type="HAMAP" id="MF_00090">
    <property type="entry name" value="PIMT"/>
    <property type="match status" value="1"/>
</dbReference>
<dbReference type="InterPro" id="IPR000682">
    <property type="entry name" value="PCMT"/>
</dbReference>
<dbReference type="InterPro" id="IPR029063">
    <property type="entry name" value="SAM-dependent_MTases_sf"/>
</dbReference>
<dbReference type="NCBIfam" id="TIGR00080">
    <property type="entry name" value="pimt"/>
    <property type="match status" value="1"/>
</dbReference>
<dbReference type="NCBIfam" id="NF001453">
    <property type="entry name" value="PRK00312.1"/>
    <property type="match status" value="1"/>
</dbReference>
<dbReference type="PANTHER" id="PTHR11579">
    <property type="entry name" value="PROTEIN-L-ISOASPARTATE O-METHYLTRANSFERASE"/>
    <property type="match status" value="1"/>
</dbReference>
<dbReference type="PANTHER" id="PTHR11579:SF0">
    <property type="entry name" value="PROTEIN-L-ISOASPARTATE(D-ASPARTATE) O-METHYLTRANSFERASE"/>
    <property type="match status" value="1"/>
</dbReference>
<dbReference type="Pfam" id="PF01135">
    <property type="entry name" value="PCMT"/>
    <property type="match status" value="1"/>
</dbReference>
<dbReference type="SUPFAM" id="SSF53335">
    <property type="entry name" value="S-adenosyl-L-methionine-dependent methyltransferases"/>
    <property type="match status" value="1"/>
</dbReference>
<dbReference type="PROSITE" id="PS01279">
    <property type="entry name" value="PCMT"/>
    <property type="match status" value="1"/>
</dbReference>
<accession>Q487E5</accession>
<proteinExistence type="inferred from homology"/>
<comment type="function">
    <text evidence="1">Catalyzes the methyl esterification of L-isoaspartyl residues in peptides and proteins that result from spontaneous decomposition of normal L-aspartyl and L-asparaginyl residues. It plays a role in the repair and/or degradation of damaged proteins.</text>
</comment>
<comment type="catalytic activity">
    <reaction evidence="1">
        <text>[protein]-L-isoaspartate + S-adenosyl-L-methionine = [protein]-L-isoaspartate alpha-methyl ester + S-adenosyl-L-homocysteine</text>
        <dbReference type="Rhea" id="RHEA:12705"/>
        <dbReference type="Rhea" id="RHEA-COMP:12143"/>
        <dbReference type="Rhea" id="RHEA-COMP:12144"/>
        <dbReference type="ChEBI" id="CHEBI:57856"/>
        <dbReference type="ChEBI" id="CHEBI:59789"/>
        <dbReference type="ChEBI" id="CHEBI:90596"/>
        <dbReference type="ChEBI" id="CHEBI:90598"/>
        <dbReference type="EC" id="2.1.1.77"/>
    </reaction>
</comment>
<comment type="subcellular location">
    <subcellularLocation>
        <location evidence="1">Cytoplasm</location>
    </subcellularLocation>
</comment>
<comment type="similarity">
    <text evidence="1">Belongs to the methyltransferase superfamily. L-isoaspartyl/D-aspartyl protein methyltransferase family.</text>
</comment>
<reference key="1">
    <citation type="journal article" date="2005" name="Proc. Natl. Acad. Sci. U.S.A.">
        <title>The psychrophilic lifestyle as revealed by the genome sequence of Colwellia psychrerythraea 34H through genomic and proteomic analyses.</title>
        <authorList>
            <person name="Methe B.A."/>
            <person name="Nelson K.E."/>
            <person name="Deming J.W."/>
            <person name="Momen B."/>
            <person name="Melamud E."/>
            <person name="Zhang X."/>
            <person name="Moult J."/>
            <person name="Madupu R."/>
            <person name="Nelson W.C."/>
            <person name="Dodson R.J."/>
            <person name="Brinkac L.M."/>
            <person name="Daugherty S.C."/>
            <person name="Durkin A.S."/>
            <person name="DeBoy R.T."/>
            <person name="Kolonay J.F."/>
            <person name="Sullivan S.A."/>
            <person name="Zhou L."/>
            <person name="Davidsen T.M."/>
            <person name="Wu M."/>
            <person name="Huston A.L."/>
            <person name="Lewis M."/>
            <person name="Weaver B."/>
            <person name="Weidman J.F."/>
            <person name="Khouri H."/>
            <person name="Utterback T.R."/>
            <person name="Feldblyum T.V."/>
            <person name="Fraser C.M."/>
        </authorList>
    </citation>
    <scope>NUCLEOTIDE SEQUENCE [LARGE SCALE GENOMIC DNA]</scope>
    <source>
        <strain>34H / ATCC BAA-681</strain>
    </source>
</reference>
<gene>
    <name evidence="1" type="primary">pcm</name>
    <name type="ordered locus">CPS_1076</name>
</gene>
<feature type="chain" id="PRO_0000351848" description="Protein-L-isoaspartate O-methyltransferase">
    <location>
        <begin position="1"/>
        <end position="216"/>
    </location>
</feature>
<feature type="active site" evidence="1">
    <location>
        <position position="66"/>
    </location>
</feature>